<evidence type="ECO:0000255" key="1"/>
<evidence type="ECO:0000305" key="2"/>
<evidence type="ECO:0000312" key="3">
    <source>
        <dbReference type="HGNC" id="HGNC:13576"/>
    </source>
</evidence>
<proteinExistence type="inferred from homology"/>
<accession>Q5SWL7</accession>
<accession>A6NFR9</accession>
<sequence>MSIQAPPRLLELAGQSLLRDQALSISAMEELPRVLYLPLFMEAFRRRHFQTLTVMVQAWPFTCLPLGSLMKTLHLETLKALLEGLHMLLTQKDRPRRWKLQVLDLRDVDENFWARWPGAWALSCFPETMSKRQTAEDCPRMGEHQPLKVFIDICLKEIPQDECLRYLFQWVYQRRGLVHLCCSKLVNYLTPIKHLRKSLKIIYLNSIQQLEIRNMSWPRLIRKLRCYLKEMKNLRKLVFSRCHHSMSDNELEGRLVTKFSSVFLRLEHLQLLKIKLITFFSGHLEQLIRCLQNPLENLELTYGYLLEEDMKCLSQYPSLGYLKHLNLSYVLLFRISLEPLGALLEKIAASLETLILEGCQIHYSQLSAILPGLSHCSQLTTFYFGRNCMSMGALKDLLCHTSGLSKLSLETYPAPEESLNSLVRVDWEIFALLRAELMCTLREVRQPKRIFIGPTPCPSCGSSPSEELELHLCC</sequence>
<keyword id="KW-0433">Leucine-rich repeat</keyword>
<keyword id="KW-1185">Reference proteome</keyword>
<keyword id="KW-0677">Repeat</keyword>
<gene>
    <name evidence="3" type="primary">PRAMEF14</name>
</gene>
<dbReference type="EMBL" id="AC243961">
    <property type="status" value="NOT_ANNOTATED_CDS"/>
    <property type="molecule type" value="Genomic_DNA"/>
</dbReference>
<dbReference type="CCDS" id="CCDS76109.1"/>
<dbReference type="RefSeq" id="NP_001019832.2">
    <property type="nucleotide sequence ID" value="NM_001024661.2"/>
</dbReference>
<dbReference type="SMR" id="Q5SWL7"/>
<dbReference type="FunCoup" id="Q5SWL7">
    <property type="interactions" value="23"/>
</dbReference>
<dbReference type="STRING" id="9606.ENSP00000334410"/>
<dbReference type="GlyGen" id="Q5SWL7">
    <property type="glycosylation" value="1 site"/>
</dbReference>
<dbReference type="iPTMnet" id="Q5SWL7"/>
<dbReference type="PhosphoSitePlus" id="Q5SWL7"/>
<dbReference type="BioMuta" id="PRAMEF14"/>
<dbReference type="DMDM" id="74743941"/>
<dbReference type="MassIVE" id="Q5SWL7"/>
<dbReference type="PaxDb" id="9606-ENSP00000334410"/>
<dbReference type="PeptideAtlas" id="Q5SWL7"/>
<dbReference type="Pumba" id="Q5SWL7"/>
<dbReference type="Antibodypedia" id="68128">
    <property type="antibodies" value="5 antibodies from 4 providers"/>
</dbReference>
<dbReference type="DNASU" id="729528"/>
<dbReference type="Ensembl" id="ENST00000334600.7">
    <property type="protein sequence ID" value="ENSP00000334410.5"/>
    <property type="gene ID" value="ENSG00000204481.8"/>
</dbReference>
<dbReference type="GeneID" id="729528"/>
<dbReference type="KEGG" id="hsa:729528"/>
<dbReference type="MANE-Select" id="ENST00000334600.7">
    <property type="protein sequence ID" value="ENSP00000334410.5"/>
    <property type="RefSeq nucleotide sequence ID" value="NM_001024661.2"/>
    <property type="RefSeq protein sequence ID" value="NP_001019832.2"/>
</dbReference>
<dbReference type="AGR" id="HGNC:13576"/>
<dbReference type="CTD" id="729528"/>
<dbReference type="GeneCards" id="PRAMEF14"/>
<dbReference type="HGNC" id="HGNC:13576">
    <property type="gene designation" value="PRAMEF14"/>
</dbReference>
<dbReference type="HPA" id="ENSG00000204481">
    <property type="expression patterns" value="Not detected"/>
</dbReference>
<dbReference type="neXtProt" id="NX_Q5SWL7"/>
<dbReference type="OpenTargets" id="ENSG00000204481"/>
<dbReference type="PharmGKB" id="PA145148171"/>
<dbReference type="VEuPathDB" id="HostDB:ENSG00000204481"/>
<dbReference type="eggNOG" id="ENOG502QWSJ">
    <property type="taxonomic scope" value="Eukaryota"/>
</dbReference>
<dbReference type="GeneTree" id="ENSGT01030000234531"/>
<dbReference type="HOGENOM" id="CLU_039635_2_1_1"/>
<dbReference type="InParanoid" id="Q5SWL7"/>
<dbReference type="OMA" id="RYLCGWI"/>
<dbReference type="OrthoDB" id="9623026at2759"/>
<dbReference type="PAN-GO" id="Q5SWL7">
    <property type="GO annotations" value="1 GO annotation based on evolutionary models"/>
</dbReference>
<dbReference type="PhylomeDB" id="Q5SWL7"/>
<dbReference type="TreeFam" id="TF332708"/>
<dbReference type="PathwayCommons" id="Q5SWL7"/>
<dbReference type="SignaLink" id="Q5SWL7"/>
<dbReference type="BioGRID-ORCS" id="729528">
    <property type="hits" value="28 hits in 556 CRISPR screens"/>
</dbReference>
<dbReference type="GenomeRNAi" id="729528"/>
<dbReference type="Pharos" id="Q5SWL7">
    <property type="development level" value="Tdark"/>
</dbReference>
<dbReference type="PRO" id="PR:Q5SWL7"/>
<dbReference type="Proteomes" id="UP000005640">
    <property type="component" value="Chromosome 1"/>
</dbReference>
<dbReference type="RNAct" id="Q5SWL7">
    <property type="molecule type" value="protein"/>
</dbReference>
<dbReference type="Bgee" id="ENSG00000204481">
    <property type="expression patterns" value="Expressed in male germ line stem cell (sensu Vertebrata) in testis and 5 other cell types or tissues"/>
</dbReference>
<dbReference type="GO" id="GO:0031462">
    <property type="term" value="C:Cul2-RING ubiquitin ligase complex"/>
    <property type="evidence" value="ECO:0000318"/>
    <property type="project" value="GO_Central"/>
</dbReference>
<dbReference type="GO" id="GO:0005737">
    <property type="term" value="C:cytoplasm"/>
    <property type="evidence" value="ECO:0000318"/>
    <property type="project" value="GO_Central"/>
</dbReference>
<dbReference type="GO" id="GO:1990756">
    <property type="term" value="F:ubiquitin-like ligase-substrate adaptor activity"/>
    <property type="evidence" value="ECO:0000318"/>
    <property type="project" value="GO_Central"/>
</dbReference>
<dbReference type="GO" id="GO:0043066">
    <property type="term" value="P:negative regulation of apoptotic process"/>
    <property type="evidence" value="ECO:0007669"/>
    <property type="project" value="InterPro"/>
</dbReference>
<dbReference type="GO" id="GO:0045596">
    <property type="term" value="P:negative regulation of cell differentiation"/>
    <property type="evidence" value="ECO:0007669"/>
    <property type="project" value="InterPro"/>
</dbReference>
<dbReference type="GO" id="GO:0045892">
    <property type="term" value="P:negative regulation of DNA-templated transcription"/>
    <property type="evidence" value="ECO:0007669"/>
    <property type="project" value="InterPro"/>
</dbReference>
<dbReference type="GO" id="GO:0008284">
    <property type="term" value="P:positive regulation of cell population proliferation"/>
    <property type="evidence" value="ECO:0007669"/>
    <property type="project" value="InterPro"/>
</dbReference>
<dbReference type="GO" id="GO:0043161">
    <property type="term" value="P:proteasome-mediated ubiquitin-dependent protein catabolic process"/>
    <property type="evidence" value="ECO:0000318"/>
    <property type="project" value="GO_Central"/>
</dbReference>
<dbReference type="FunFam" id="3.80.10.10:FF:000079">
    <property type="entry name" value="PRAME family member 18"/>
    <property type="match status" value="1"/>
</dbReference>
<dbReference type="Gene3D" id="3.80.10.10">
    <property type="entry name" value="Ribonuclease Inhibitor"/>
    <property type="match status" value="1"/>
</dbReference>
<dbReference type="InterPro" id="IPR032675">
    <property type="entry name" value="LRR_dom_sf"/>
</dbReference>
<dbReference type="InterPro" id="IPR026271">
    <property type="entry name" value="PRAME"/>
</dbReference>
<dbReference type="InterPro" id="IPR050694">
    <property type="entry name" value="PRAME_domain"/>
</dbReference>
<dbReference type="PANTHER" id="PTHR14224:SF81">
    <property type="entry name" value="PRAME FAMILY MEMBER 1-RELATED"/>
    <property type="match status" value="1"/>
</dbReference>
<dbReference type="PANTHER" id="PTHR14224">
    <property type="entry name" value="SIMILAR TO PREFERENTIALLY EXPRESSED ANTIGEN IN MELANOMA-LIKE 3"/>
    <property type="match status" value="1"/>
</dbReference>
<dbReference type="PIRSF" id="PIRSF038286">
    <property type="entry name" value="PRAME"/>
    <property type="match status" value="1"/>
</dbReference>
<dbReference type="SUPFAM" id="SSF52047">
    <property type="entry name" value="RNI-like"/>
    <property type="match status" value="1"/>
</dbReference>
<feature type="chain" id="PRO_0000290166" description="PRAME family member 14">
    <location>
        <begin position="1"/>
        <end position="474"/>
    </location>
</feature>
<feature type="repeat" description="LRR 1" evidence="1">
    <location>
        <begin position="15"/>
        <end position="38"/>
    </location>
</feature>
<feature type="repeat" description="LRR 2" evidence="1">
    <location>
        <begin position="204"/>
        <end position="229"/>
    </location>
</feature>
<feature type="repeat" description="LRR 3" evidence="1">
    <location>
        <begin position="271"/>
        <end position="294"/>
    </location>
</feature>
<feature type="repeat" description="LRR 4" evidence="1">
    <location>
        <begin position="319"/>
        <end position="342"/>
    </location>
</feature>
<feature type="repeat" description="LRR 5" evidence="1">
    <location>
        <begin position="391"/>
        <end position="414"/>
    </location>
</feature>
<reference key="1">
    <citation type="journal article" date="2006" name="Nature">
        <title>The DNA sequence and biological annotation of human chromosome 1.</title>
        <authorList>
            <person name="Gregory S.G."/>
            <person name="Barlow K.F."/>
            <person name="McLay K.E."/>
            <person name="Kaul R."/>
            <person name="Swarbreck D."/>
            <person name="Dunham A."/>
            <person name="Scott C.E."/>
            <person name="Howe K.L."/>
            <person name="Woodfine K."/>
            <person name="Spencer C.C.A."/>
            <person name="Jones M.C."/>
            <person name="Gillson C."/>
            <person name="Searle S."/>
            <person name="Zhou Y."/>
            <person name="Kokocinski F."/>
            <person name="McDonald L."/>
            <person name="Evans R."/>
            <person name="Phillips K."/>
            <person name="Atkinson A."/>
            <person name="Cooper R."/>
            <person name="Jones C."/>
            <person name="Hall R.E."/>
            <person name="Andrews T.D."/>
            <person name="Lloyd C."/>
            <person name="Ainscough R."/>
            <person name="Almeida J.P."/>
            <person name="Ambrose K.D."/>
            <person name="Anderson F."/>
            <person name="Andrew R.W."/>
            <person name="Ashwell R.I.S."/>
            <person name="Aubin K."/>
            <person name="Babbage A.K."/>
            <person name="Bagguley C.L."/>
            <person name="Bailey J."/>
            <person name="Beasley H."/>
            <person name="Bethel G."/>
            <person name="Bird C.P."/>
            <person name="Bray-Allen S."/>
            <person name="Brown J.Y."/>
            <person name="Brown A.J."/>
            <person name="Buckley D."/>
            <person name="Burton J."/>
            <person name="Bye J."/>
            <person name="Carder C."/>
            <person name="Chapman J.C."/>
            <person name="Clark S.Y."/>
            <person name="Clarke G."/>
            <person name="Clee C."/>
            <person name="Cobley V."/>
            <person name="Collier R.E."/>
            <person name="Corby N."/>
            <person name="Coville G.J."/>
            <person name="Davies J."/>
            <person name="Deadman R."/>
            <person name="Dunn M."/>
            <person name="Earthrowl M."/>
            <person name="Ellington A.G."/>
            <person name="Errington H."/>
            <person name="Frankish A."/>
            <person name="Frankland J."/>
            <person name="French L."/>
            <person name="Garner P."/>
            <person name="Garnett J."/>
            <person name="Gay L."/>
            <person name="Ghori M.R.J."/>
            <person name="Gibson R."/>
            <person name="Gilby L.M."/>
            <person name="Gillett W."/>
            <person name="Glithero R.J."/>
            <person name="Grafham D.V."/>
            <person name="Griffiths C."/>
            <person name="Griffiths-Jones S."/>
            <person name="Grocock R."/>
            <person name="Hammond S."/>
            <person name="Harrison E.S.I."/>
            <person name="Hart E."/>
            <person name="Haugen E."/>
            <person name="Heath P.D."/>
            <person name="Holmes S."/>
            <person name="Holt K."/>
            <person name="Howden P.J."/>
            <person name="Hunt A.R."/>
            <person name="Hunt S.E."/>
            <person name="Hunter G."/>
            <person name="Isherwood J."/>
            <person name="James R."/>
            <person name="Johnson C."/>
            <person name="Johnson D."/>
            <person name="Joy A."/>
            <person name="Kay M."/>
            <person name="Kershaw J.K."/>
            <person name="Kibukawa M."/>
            <person name="Kimberley A.M."/>
            <person name="King A."/>
            <person name="Knights A.J."/>
            <person name="Lad H."/>
            <person name="Laird G."/>
            <person name="Lawlor S."/>
            <person name="Leongamornlert D.A."/>
            <person name="Lloyd D.M."/>
            <person name="Loveland J."/>
            <person name="Lovell J."/>
            <person name="Lush M.J."/>
            <person name="Lyne R."/>
            <person name="Martin S."/>
            <person name="Mashreghi-Mohammadi M."/>
            <person name="Matthews L."/>
            <person name="Matthews N.S.W."/>
            <person name="McLaren S."/>
            <person name="Milne S."/>
            <person name="Mistry S."/>
            <person name="Moore M.J.F."/>
            <person name="Nickerson T."/>
            <person name="O'Dell C.N."/>
            <person name="Oliver K."/>
            <person name="Palmeiri A."/>
            <person name="Palmer S.A."/>
            <person name="Parker A."/>
            <person name="Patel D."/>
            <person name="Pearce A.V."/>
            <person name="Peck A.I."/>
            <person name="Pelan S."/>
            <person name="Phelps K."/>
            <person name="Phillimore B.J."/>
            <person name="Plumb R."/>
            <person name="Rajan J."/>
            <person name="Raymond C."/>
            <person name="Rouse G."/>
            <person name="Saenphimmachak C."/>
            <person name="Sehra H.K."/>
            <person name="Sheridan E."/>
            <person name="Shownkeen R."/>
            <person name="Sims S."/>
            <person name="Skuce C.D."/>
            <person name="Smith M."/>
            <person name="Steward C."/>
            <person name="Subramanian S."/>
            <person name="Sycamore N."/>
            <person name="Tracey A."/>
            <person name="Tromans A."/>
            <person name="Van Helmond Z."/>
            <person name="Wall M."/>
            <person name="Wallis J.M."/>
            <person name="White S."/>
            <person name="Whitehead S.L."/>
            <person name="Wilkinson J.E."/>
            <person name="Willey D.L."/>
            <person name="Williams H."/>
            <person name="Wilming L."/>
            <person name="Wray P.W."/>
            <person name="Wu Z."/>
            <person name="Coulson A."/>
            <person name="Vaudin M."/>
            <person name="Sulston J.E."/>
            <person name="Durbin R.M."/>
            <person name="Hubbard T."/>
            <person name="Wooster R."/>
            <person name="Dunham I."/>
            <person name="Carter N.P."/>
            <person name="McVean G."/>
            <person name="Ross M.T."/>
            <person name="Harrow J."/>
            <person name="Olson M.V."/>
            <person name="Beck S."/>
            <person name="Rogers J."/>
            <person name="Bentley D.R."/>
        </authorList>
    </citation>
    <scope>NUCLEOTIDE SEQUENCE [LARGE SCALE GENOMIC DNA]</scope>
</reference>
<organism>
    <name type="scientific">Homo sapiens</name>
    <name type="common">Human</name>
    <dbReference type="NCBI Taxonomy" id="9606"/>
    <lineage>
        <taxon>Eukaryota</taxon>
        <taxon>Metazoa</taxon>
        <taxon>Chordata</taxon>
        <taxon>Craniata</taxon>
        <taxon>Vertebrata</taxon>
        <taxon>Euteleostomi</taxon>
        <taxon>Mammalia</taxon>
        <taxon>Eutheria</taxon>
        <taxon>Euarchontoglires</taxon>
        <taxon>Primates</taxon>
        <taxon>Haplorrhini</taxon>
        <taxon>Catarrhini</taxon>
        <taxon>Hominidae</taxon>
        <taxon>Homo</taxon>
    </lineage>
</organism>
<name>PRA14_HUMAN</name>
<protein>
    <recommendedName>
        <fullName evidence="3">PRAME family member 14</fullName>
    </recommendedName>
</protein>
<comment type="similarity">
    <text evidence="2">Belongs to the PRAME family.</text>
</comment>